<comment type="function">
    <text evidence="1">Histone methyltransferase that monomethylates 'Lys-5', 'Lys-8' and 'Lys-12' of histone H4 (H4K5me1, H4K8me1 and H4K12me1, respectively), thereby controlling gene expression and remodeling chromatin structures.</text>
</comment>
<comment type="catalytic activity">
    <reaction evidence="1">
        <text>L-lysyl-[histone] + S-adenosyl-L-methionine = N(6)-methyl-L-lysyl-[histone] + S-adenosyl-L-homocysteine + H(+)</text>
        <dbReference type="Rhea" id="RHEA:10024"/>
        <dbReference type="Rhea" id="RHEA-COMP:9845"/>
        <dbReference type="Rhea" id="RHEA-COMP:9846"/>
        <dbReference type="ChEBI" id="CHEBI:15378"/>
        <dbReference type="ChEBI" id="CHEBI:29969"/>
        <dbReference type="ChEBI" id="CHEBI:57856"/>
        <dbReference type="ChEBI" id="CHEBI:59789"/>
        <dbReference type="ChEBI" id="CHEBI:61929"/>
    </reaction>
    <physiologicalReaction direction="left-to-right" evidence="1">
        <dbReference type="Rhea" id="RHEA:10025"/>
    </physiologicalReaction>
</comment>
<comment type="subcellular location">
    <subcellularLocation>
        <location evidence="1">Nucleus</location>
    </subcellularLocation>
    <subcellularLocation>
        <location evidence="1">Chromosome</location>
    </subcellularLocation>
    <subcellularLocation>
        <location evidence="1">Cytoplasm</location>
    </subcellularLocation>
</comment>
<comment type="similarity">
    <text evidence="2">Belongs to the class V-like SAM-binding methyltransferase superfamily. Histone-lysine methyltransferase family. SET5 subfamily.</text>
</comment>
<reference key="1">
    <citation type="journal article" date="2009" name="Nature">
        <title>Evolution of pathogenicity and sexual reproduction in eight Candida genomes.</title>
        <authorList>
            <person name="Butler G."/>
            <person name="Rasmussen M.D."/>
            <person name="Lin M.F."/>
            <person name="Santos M.A.S."/>
            <person name="Sakthikumar S."/>
            <person name="Munro C.A."/>
            <person name="Rheinbay E."/>
            <person name="Grabherr M."/>
            <person name="Forche A."/>
            <person name="Reedy J.L."/>
            <person name="Agrafioti I."/>
            <person name="Arnaud M.B."/>
            <person name="Bates S."/>
            <person name="Brown A.J.P."/>
            <person name="Brunke S."/>
            <person name="Costanzo M.C."/>
            <person name="Fitzpatrick D.A."/>
            <person name="de Groot P.W.J."/>
            <person name="Harris D."/>
            <person name="Hoyer L.L."/>
            <person name="Hube B."/>
            <person name="Klis F.M."/>
            <person name="Kodira C."/>
            <person name="Lennard N."/>
            <person name="Logue M.E."/>
            <person name="Martin R."/>
            <person name="Neiman A.M."/>
            <person name="Nikolaou E."/>
            <person name="Quail M.A."/>
            <person name="Quinn J."/>
            <person name="Santos M.C."/>
            <person name="Schmitzberger F.F."/>
            <person name="Sherlock G."/>
            <person name="Shah P."/>
            <person name="Silverstein K.A.T."/>
            <person name="Skrzypek M.S."/>
            <person name="Soll D."/>
            <person name="Staggs R."/>
            <person name="Stansfield I."/>
            <person name="Stumpf M.P.H."/>
            <person name="Sudbery P.E."/>
            <person name="Srikantha T."/>
            <person name="Zeng Q."/>
            <person name="Berman J."/>
            <person name="Berriman M."/>
            <person name="Heitman J."/>
            <person name="Gow N.A.R."/>
            <person name="Lorenz M.C."/>
            <person name="Birren B.W."/>
            <person name="Kellis M."/>
            <person name="Cuomo C.A."/>
        </authorList>
    </citation>
    <scope>NUCLEOTIDE SEQUENCE [LARGE SCALE GENOMIC DNA]</scope>
    <source>
        <strain>ATCC 6260 / CBS 566 / DSM 6381 / JCM 1539 / NBRC 10279 / NRRL Y-324</strain>
    </source>
</reference>
<dbReference type="EC" id="2.1.1.-" evidence="1"/>
<dbReference type="EMBL" id="CH408161">
    <property type="protein sequence ID" value="EDK41485.2"/>
    <property type="molecule type" value="Genomic_DNA"/>
</dbReference>
<dbReference type="RefSeq" id="XP_001482563.1">
    <property type="nucleotide sequence ID" value="XM_001482513.1"/>
</dbReference>
<dbReference type="FunCoup" id="A5DQN2">
    <property type="interactions" value="681"/>
</dbReference>
<dbReference type="STRING" id="294746.A5DQN2"/>
<dbReference type="GeneID" id="5124202"/>
<dbReference type="KEGG" id="pgu:PGUG_05583"/>
<dbReference type="VEuPathDB" id="FungiDB:PGUG_05583"/>
<dbReference type="eggNOG" id="KOG2084">
    <property type="taxonomic scope" value="Eukaryota"/>
</dbReference>
<dbReference type="HOGENOM" id="CLU_031650_0_0_1"/>
<dbReference type="InParanoid" id="A5DQN2"/>
<dbReference type="OMA" id="LMAMYQQ"/>
<dbReference type="OrthoDB" id="438641at2759"/>
<dbReference type="Proteomes" id="UP000001997">
    <property type="component" value="Unassembled WGS sequence"/>
</dbReference>
<dbReference type="GO" id="GO:0005694">
    <property type="term" value="C:chromosome"/>
    <property type="evidence" value="ECO:0007669"/>
    <property type="project" value="UniProtKB-SubCell"/>
</dbReference>
<dbReference type="GO" id="GO:0005737">
    <property type="term" value="C:cytoplasm"/>
    <property type="evidence" value="ECO:0007669"/>
    <property type="project" value="UniProtKB-SubCell"/>
</dbReference>
<dbReference type="GO" id="GO:0005634">
    <property type="term" value="C:nucleus"/>
    <property type="evidence" value="ECO:0007669"/>
    <property type="project" value="UniProtKB-SubCell"/>
</dbReference>
<dbReference type="GO" id="GO:0042799">
    <property type="term" value="F:histone H4K20 methyltransferase activity"/>
    <property type="evidence" value="ECO:0007669"/>
    <property type="project" value="TreeGrafter"/>
</dbReference>
<dbReference type="GO" id="GO:0032259">
    <property type="term" value="P:methylation"/>
    <property type="evidence" value="ECO:0007669"/>
    <property type="project" value="UniProtKB-KW"/>
</dbReference>
<dbReference type="GO" id="GO:0045814">
    <property type="term" value="P:negative regulation of gene expression, epigenetic"/>
    <property type="evidence" value="ECO:0007669"/>
    <property type="project" value="TreeGrafter"/>
</dbReference>
<dbReference type="CDD" id="cd20071">
    <property type="entry name" value="SET_SMYD"/>
    <property type="match status" value="1"/>
</dbReference>
<dbReference type="Gene3D" id="1.10.220.160">
    <property type="match status" value="1"/>
</dbReference>
<dbReference type="Gene3D" id="6.10.140.2220">
    <property type="match status" value="1"/>
</dbReference>
<dbReference type="Gene3D" id="2.170.270.10">
    <property type="entry name" value="SET domain"/>
    <property type="match status" value="1"/>
</dbReference>
<dbReference type="InterPro" id="IPR001214">
    <property type="entry name" value="SET_dom"/>
</dbReference>
<dbReference type="InterPro" id="IPR046341">
    <property type="entry name" value="SET_dom_sf"/>
</dbReference>
<dbReference type="PANTHER" id="PTHR46402:SF2">
    <property type="entry name" value="HISTONE-LYSINE N-TRIMETHYLTRANSFERASE SMYD5"/>
    <property type="match status" value="1"/>
</dbReference>
<dbReference type="PANTHER" id="PTHR46402">
    <property type="entry name" value="SET AND MYND DOMAIN-CONTAINING PROTEIN 5"/>
    <property type="match status" value="1"/>
</dbReference>
<dbReference type="Pfam" id="PF00856">
    <property type="entry name" value="SET"/>
    <property type="match status" value="1"/>
</dbReference>
<dbReference type="SMART" id="SM00317">
    <property type="entry name" value="SET"/>
    <property type="match status" value="1"/>
</dbReference>
<dbReference type="SUPFAM" id="SSF82199">
    <property type="entry name" value="SET domain"/>
    <property type="match status" value="1"/>
</dbReference>
<dbReference type="PROSITE" id="PS50280">
    <property type="entry name" value="SET"/>
    <property type="match status" value="1"/>
</dbReference>
<keyword id="KW-0158">Chromosome</keyword>
<keyword id="KW-0963">Cytoplasm</keyword>
<keyword id="KW-0489">Methyltransferase</keyword>
<keyword id="KW-0539">Nucleus</keyword>
<keyword id="KW-1185">Reference proteome</keyword>
<keyword id="KW-0949">S-adenosyl-L-methionine</keyword>
<keyword id="KW-0808">Transferase</keyword>
<name>SET5_PICGU</name>
<protein>
    <recommendedName>
        <fullName>Histone-lysine N-methyltransferase SET5</fullName>
        <ecNumber evidence="1">2.1.1.-</ecNumber>
    </recommendedName>
    <alternativeName>
        <fullName>SET domain-containing protein 5</fullName>
    </alternativeName>
</protein>
<proteinExistence type="inferred from homology"/>
<organism>
    <name type="scientific">Meyerozyma guilliermondii (strain ATCC 6260 / CBS 566 / DSM 6381 / JCM 1539 / NBRC 10279 / NRRL Y-324)</name>
    <name type="common">Yeast</name>
    <name type="synonym">Candida guilliermondii</name>
    <dbReference type="NCBI Taxonomy" id="294746"/>
    <lineage>
        <taxon>Eukaryota</taxon>
        <taxon>Fungi</taxon>
        <taxon>Dikarya</taxon>
        <taxon>Ascomycota</taxon>
        <taxon>Saccharomycotina</taxon>
        <taxon>Pichiomycetes</taxon>
        <taxon>Debaryomycetaceae</taxon>
        <taxon>Meyerozyma</taxon>
    </lineage>
</organism>
<gene>
    <name type="primary">SET5</name>
    <name type="ORF">PGUG_05583</name>
</gene>
<sequence length="483" mass="54585">MIDKLDGQQEPKVEILDINDHVQESSDPVVPHERQIIDDIIAIWKEDPSSESLGVPKLHAKVKSRHPTWSVSEKRVRTLLKTYGLITTNQQFTYANEIHSRIVSSIELPPKVKVTMTAKRGKGLYAKTQIRKGDLIWEERPLFFVPALANVKLVRTGRACAYCAKLLTQRSSTGLSALRGLDCNVCPELWCSKDCKTLDTLHAKLKHNMSSHSNGKGSNLIDASGFIALEDYCFQEQWNALYAITLIYAEMQADKTRTKAEYFSSMARVSQKVRYKAINSSAGSFDTMQGGALFVMEQQEALWNEGYQKFLKVFPSAHDQVPFEEFMMMMGTYNINNLDSCIFLTQSHLNHSCHPNTDVQASTASRTGPLKVFAARDIKAGEELTTSYVNPSHTLHQRQRELRVNWGFICSCQRCKDEAKEHHRRKSSNGMGAKEVPSNIREMLKDTKSAIGNSEIELEIPTVQGGERRKSVRFDEHVISVNQ</sequence>
<evidence type="ECO:0000250" key="1">
    <source>
        <dbReference type="UniProtKB" id="P38890"/>
    </source>
</evidence>
<evidence type="ECO:0000255" key="2">
    <source>
        <dbReference type="PROSITE-ProRule" id="PRU00190"/>
    </source>
</evidence>
<evidence type="ECO:0000256" key="3">
    <source>
        <dbReference type="SAM" id="MobiDB-lite"/>
    </source>
</evidence>
<accession>A5DQN2</accession>
<feature type="chain" id="PRO_0000324470" description="Histone-lysine N-methyltransferase SET5">
    <location>
        <begin position="1"/>
        <end position="483"/>
    </location>
</feature>
<feature type="domain" description="SET" evidence="2">
    <location>
        <begin position="110"/>
        <end position="389"/>
    </location>
</feature>
<feature type="region of interest" description="Disordered" evidence="3">
    <location>
        <begin position="420"/>
        <end position="439"/>
    </location>
</feature>